<comment type="function">
    <text evidence="1">Bifunctional enzyme that catalyzes the epimerization of the S- and R-forms of NAD(P)HX and the dehydration of the S-form of NAD(P)HX at the expense of ADP, which is converted to AMP. This allows the repair of both epimers of NAD(P)HX, a damaged form of NAD(P)H that is a result of enzymatic or heat-dependent hydration (By similarity).</text>
</comment>
<comment type="catalytic activity">
    <reaction>
        <text>(6S)-NADHX + ADP = AMP + phosphate + NADH + H(+)</text>
        <dbReference type="Rhea" id="RHEA:32223"/>
        <dbReference type="ChEBI" id="CHEBI:15378"/>
        <dbReference type="ChEBI" id="CHEBI:43474"/>
        <dbReference type="ChEBI" id="CHEBI:57945"/>
        <dbReference type="ChEBI" id="CHEBI:64074"/>
        <dbReference type="ChEBI" id="CHEBI:456215"/>
        <dbReference type="ChEBI" id="CHEBI:456216"/>
        <dbReference type="EC" id="4.2.1.136"/>
    </reaction>
</comment>
<comment type="catalytic activity">
    <reaction>
        <text>(6S)-NADPHX + ADP = AMP + phosphate + NADPH + H(+)</text>
        <dbReference type="Rhea" id="RHEA:32235"/>
        <dbReference type="ChEBI" id="CHEBI:15378"/>
        <dbReference type="ChEBI" id="CHEBI:43474"/>
        <dbReference type="ChEBI" id="CHEBI:57783"/>
        <dbReference type="ChEBI" id="CHEBI:64076"/>
        <dbReference type="ChEBI" id="CHEBI:456215"/>
        <dbReference type="ChEBI" id="CHEBI:456216"/>
        <dbReference type="EC" id="4.2.1.136"/>
    </reaction>
</comment>
<comment type="catalytic activity">
    <reaction>
        <text>(6R)-NADHX = (6S)-NADHX</text>
        <dbReference type="Rhea" id="RHEA:32215"/>
        <dbReference type="ChEBI" id="CHEBI:64074"/>
        <dbReference type="ChEBI" id="CHEBI:64075"/>
        <dbReference type="EC" id="5.1.99.6"/>
    </reaction>
</comment>
<comment type="catalytic activity">
    <reaction>
        <text>(6R)-NADPHX = (6S)-NADPHX</text>
        <dbReference type="Rhea" id="RHEA:32227"/>
        <dbReference type="ChEBI" id="CHEBI:64076"/>
        <dbReference type="ChEBI" id="CHEBI:64077"/>
        <dbReference type="EC" id="5.1.99.6"/>
    </reaction>
</comment>
<comment type="cofactor">
    <cofactor evidence="1">
        <name>K(+)</name>
        <dbReference type="ChEBI" id="CHEBI:29103"/>
    </cofactor>
    <text evidence="1">Binds 1 potassium ion per subunit.</text>
</comment>
<comment type="similarity">
    <text evidence="2">In the N-terminal section; belongs to the NnrE/AIBP family.</text>
</comment>
<comment type="similarity">
    <text evidence="2">In the C-terminal section; belongs to the NnrD/CARKD family.</text>
</comment>
<accession>A1S0R2</accession>
<name>NNR_THEPD</name>
<reference key="1">
    <citation type="journal article" date="2008" name="J. Bacteriol.">
        <title>Genome sequence of Thermofilum pendens reveals an exceptional loss of biosynthetic pathways without genome reduction.</title>
        <authorList>
            <person name="Anderson I."/>
            <person name="Rodriguez J."/>
            <person name="Susanti D."/>
            <person name="Porat I."/>
            <person name="Reich C."/>
            <person name="Ulrich L.E."/>
            <person name="Elkins J.G."/>
            <person name="Mavromatis K."/>
            <person name="Lykidis A."/>
            <person name="Kim E."/>
            <person name="Thompson L.S."/>
            <person name="Nolan M."/>
            <person name="Land M."/>
            <person name="Copeland A."/>
            <person name="Lapidus A."/>
            <person name="Lucas S."/>
            <person name="Detter C."/>
            <person name="Zhulin I.B."/>
            <person name="Olsen G.J."/>
            <person name="Whitman W."/>
            <person name="Mukhopadhyay B."/>
            <person name="Bristow J."/>
            <person name="Kyrpides N."/>
        </authorList>
    </citation>
    <scope>NUCLEOTIDE SEQUENCE [LARGE SCALE GENOMIC DNA]</scope>
    <source>
        <strain>DSM 2475 / Hrk 5</strain>
    </source>
</reference>
<feature type="chain" id="PRO_0000416432" description="Bifunctional NAD(P)H-hydrate repair enzyme Nnr">
    <location>
        <begin position="1"/>
        <end position="524"/>
    </location>
</feature>
<feature type="domain" description="YjeF N-terminal">
    <location>
        <begin position="9"/>
        <end position="218"/>
    </location>
</feature>
<feature type="domain" description="YjeF C-terminal">
    <location>
        <begin position="224"/>
        <end position="507"/>
    </location>
</feature>
<feature type="region of interest" description="NAD(P)H-hydrate epimerase" evidence="1">
    <location>
        <begin position="1"/>
        <end position="219"/>
    </location>
</feature>
<feature type="region of interest" description="NADPHX 1; for epimerase activity" evidence="1">
    <location>
        <begin position="57"/>
        <end position="61"/>
    </location>
</feature>
<feature type="region of interest" description="NADPHX 1; for epimerase activity" evidence="1">
    <location>
        <begin position="132"/>
        <end position="138"/>
    </location>
</feature>
<feature type="region of interest" description="ADP-dependent (S)-NAD(P)H-hydrate dehydratase" evidence="1">
    <location>
        <begin position="224"/>
        <end position="524"/>
    </location>
</feature>
<feature type="region of interest" description="NADPHX 2; for dehydratase activity" evidence="1">
    <location>
        <begin position="381"/>
        <end position="387"/>
    </location>
</feature>
<feature type="binding site" evidence="1">
    <location>
        <position position="58"/>
    </location>
    <ligand>
        <name>K(+)</name>
        <dbReference type="ChEBI" id="CHEBI:29103"/>
    </ligand>
</feature>
<feature type="binding site" evidence="1">
    <location>
        <position position="128"/>
    </location>
    <ligand>
        <name>K(+)</name>
        <dbReference type="ChEBI" id="CHEBI:29103"/>
    </ligand>
</feature>
<feature type="binding site" evidence="1">
    <location>
        <position position="143"/>
    </location>
    <ligand>
        <name>(6S)-NADPHX</name>
        <dbReference type="ChEBI" id="CHEBI:64076"/>
        <label>1</label>
        <note>for epimerase activity</note>
    </ligand>
</feature>
<feature type="binding site" evidence="1">
    <location>
        <position position="161"/>
    </location>
    <ligand>
        <name>(6S)-NADPHX</name>
        <dbReference type="ChEBI" id="CHEBI:64076"/>
        <label>1</label>
        <note>for epimerase activity</note>
    </ligand>
</feature>
<feature type="binding site" evidence="1">
    <location>
        <position position="164"/>
    </location>
    <ligand>
        <name>K(+)</name>
        <dbReference type="ChEBI" id="CHEBI:29103"/>
    </ligand>
</feature>
<feature type="binding site" evidence="1">
    <location>
        <position position="330"/>
    </location>
    <ligand>
        <name>(6S)-NADPHX</name>
        <dbReference type="ChEBI" id="CHEBI:64076"/>
        <label>2</label>
        <note>for dehydratase activity</note>
    </ligand>
</feature>
<feature type="binding site" evidence="1">
    <location>
        <begin position="418"/>
        <end position="422"/>
    </location>
    <ligand>
        <name>ADP</name>
        <dbReference type="ChEBI" id="CHEBI:456216"/>
    </ligand>
</feature>
<feature type="binding site" evidence="1">
    <location>
        <begin position="438"/>
        <end position="447"/>
    </location>
    <ligand>
        <name>ADP</name>
        <dbReference type="ChEBI" id="CHEBI:456216"/>
    </ligand>
</feature>
<feature type="binding site" evidence="1">
    <location>
        <position position="448"/>
    </location>
    <ligand>
        <name>(6S)-NADPHX</name>
        <dbReference type="ChEBI" id="CHEBI:64076"/>
        <label>2</label>
        <note>for dehydratase activity</note>
    </ligand>
</feature>
<proteinExistence type="inferred from homology"/>
<keyword id="KW-0067">ATP-binding</keyword>
<keyword id="KW-0413">Isomerase</keyword>
<keyword id="KW-0456">Lyase</keyword>
<keyword id="KW-0479">Metal-binding</keyword>
<keyword id="KW-0511">Multifunctional enzyme</keyword>
<keyword id="KW-0520">NAD</keyword>
<keyword id="KW-0521">NADP</keyword>
<keyword id="KW-0547">Nucleotide-binding</keyword>
<keyword id="KW-0630">Potassium</keyword>
<keyword id="KW-1185">Reference proteome</keyword>
<protein>
    <recommendedName>
        <fullName>Bifunctional NAD(P)H-hydrate repair enzyme Nnr</fullName>
    </recommendedName>
    <alternativeName>
        <fullName>Nicotinamide nucleotide repair protein</fullName>
    </alternativeName>
    <domain>
        <recommendedName>
            <fullName>ADP-dependent (S)-NAD(P)H-hydrate dehydratase</fullName>
            <ecNumber>4.2.1.136</ecNumber>
        </recommendedName>
        <alternativeName>
            <fullName>ADP-dependent NAD(P)HX dehydratase</fullName>
        </alternativeName>
    </domain>
    <domain>
        <recommendedName>
            <fullName>NAD(P)H-hydrate epimerase</fullName>
            <ecNumber>5.1.99.6</ecNumber>
        </recommendedName>
        <alternativeName>
            <fullName>NAD(P)HX epimerase</fullName>
        </alternativeName>
    </domain>
</protein>
<gene>
    <name type="primary">nnr</name>
    <name type="ordered locus">Tpen_1647</name>
</gene>
<organism>
    <name type="scientific">Thermofilum pendens (strain DSM 2475 / Hrk 5)</name>
    <dbReference type="NCBI Taxonomy" id="368408"/>
    <lineage>
        <taxon>Archaea</taxon>
        <taxon>Thermoproteota</taxon>
        <taxon>Thermoprotei</taxon>
        <taxon>Thermofilales</taxon>
        <taxon>Thermofilaceae</taxon>
        <taxon>Thermofilum</taxon>
    </lineage>
</organism>
<evidence type="ECO:0000250" key="1"/>
<evidence type="ECO:0000305" key="2"/>
<sequence length="524" mass="55261">MKVARVSEIKLLDREAAEKYGVKEEILMENAGASVARLAVSLIGLPMSAAVVCGPGNNGGDGLVAARHLSSMGADVKVFLVAAPDKLAGIVKENYERVVKAGIAVEVVDEERAEGLSEELSLFDVVVDALFGTGLSRPLEGVYRKVVEAINGSGSLVISVDIPSGVHGDTGQVLGVAVRADYTVTFGLPKLGNLMYPGAELGGELYVHHISYPRALLEDSRLKVETNDPVPLPPRRPDTHKGDYGKALFVAGSRRYMGAPLLCSKSFLKAGGGYSRLATIKSIVPFLGVRAPEVVYEALEETASGTVAYGNLERILELSKSSDIVAVGPGLGLEEETLRLVCDLARSVEKPLIVDGDGLTAVARCGEYISERRAPTVLTPHAGEMSRLTGKSVEEVRASRVDAALELAGKLKAYVVLKGAHTVIATPDGRAYINLSGNPGMATAGSGDVLVGAIAALYGLGLGFEEAVRMGVFVHGLAGDIAAEERGQDGLTSVTLMNYLPKALRALREDFESVLERYTIKVLP</sequence>
<dbReference type="EC" id="4.2.1.136"/>
<dbReference type="EC" id="5.1.99.6"/>
<dbReference type="EMBL" id="CP000505">
    <property type="protein sequence ID" value="ABL79042.1"/>
    <property type="molecule type" value="Genomic_DNA"/>
</dbReference>
<dbReference type="RefSeq" id="WP_011753307.1">
    <property type="nucleotide sequence ID" value="NC_008698.1"/>
</dbReference>
<dbReference type="SMR" id="A1S0R2"/>
<dbReference type="STRING" id="368408.Tpen_1647"/>
<dbReference type="EnsemblBacteria" id="ABL79042">
    <property type="protein sequence ID" value="ABL79042"/>
    <property type="gene ID" value="Tpen_1647"/>
</dbReference>
<dbReference type="GeneID" id="4601241"/>
<dbReference type="KEGG" id="tpe:Tpen_1647"/>
<dbReference type="eggNOG" id="arCOG00018">
    <property type="taxonomic scope" value="Archaea"/>
</dbReference>
<dbReference type="HOGENOM" id="CLU_024853_4_1_2"/>
<dbReference type="OrthoDB" id="15148at2157"/>
<dbReference type="Proteomes" id="UP000000641">
    <property type="component" value="Chromosome"/>
</dbReference>
<dbReference type="GO" id="GO:0052855">
    <property type="term" value="F:ADP-dependent NAD(P)H-hydrate dehydratase activity"/>
    <property type="evidence" value="ECO:0007669"/>
    <property type="project" value="UniProtKB-UniRule"/>
</dbReference>
<dbReference type="GO" id="GO:0005524">
    <property type="term" value="F:ATP binding"/>
    <property type="evidence" value="ECO:0007669"/>
    <property type="project" value="UniProtKB-KW"/>
</dbReference>
<dbReference type="GO" id="GO:0046872">
    <property type="term" value="F:metal ion binding"/>
    <property type="evidence" value="ECO:0007669"/>
    <property type="project" value="UniProtKB-KW"/>
</dbReference>
<dbReference type="GO" id="GO:0052856">
    <property type="term" value="F:NAD(P)HX epimerase activity"/>
    <property type="evidence" value="ECO:0007669"/>
    <property type="project" value="UniProtKB-UniRule"/>
</dbReference>
<dbReference type="GO" id="GO:0110051">
    <property type="term" value="P:metabolite repair"/>
    <property type="evidence" value="ECO:0007669"/>
    <property type="project" value="TreeGrafter"/>
</dbReference>
<dbReference type="GO" id="GO:0046496">
    <property type="term" value="P:nicotinamide nucleotide metabolic process"/>
    <property type="evidence" value="ECO:0007669"/>
    <property type="project" value="UniProtKB-UniRule"/>
</dbReference>
<dbReference type="CDD" id="cd01171">
    <property type="entry name" value="YXKO-related"/>
    <property type="match status" value="1"/>
</dbReference>
<dbReference type="Gene3D" id="3.40.1190.20">
    <property type="match status" value="1"/>
</dbReference>
<dbReference type="Gene3D" id="3.40.50.10260">
    <property type="entry name" value="YjeF N-terminal domain"/>
    <property type="match status" value="1"/>
</dbReference>
<dbReference type="HAMAP" id="MF_01965">
    <property type="entry name" value="NADHX_dehydratase"/>
    <property type="match status" value="1"/>
</dbReference>
<dbReference type="HAMAP" id="MF_01966">
    <property type="entry name" value="NADHX_epimerase"/>
    <property type="match status" value="1"/>
</dbReference>
<dbReference type="InterPro" id="IPR000631">
    <property type="entry name" value="CARKD"/>
</dbReference>
<dbReference type="InterPro" id="IPR030677">
    <property type="entry name" value="Nnr"/>
</dbReference>
<dbReference type="InterPro" id="IPR029056">
    <property type="entry name" value="Ribokinase-like"/>
</dbReference>
<dbReference type="InterPro" id="IPR004443">
    <property type="entry name" value="YjeF_N_dom"/>
</dbReference>
<dbReference type="InterPro" id="IPR036652">
    <property type="entry name" value="YjeF_N_dom_sf"/>
</dbReference>
<dbReference type="NCBIfam" id="TIGR00196">
    <property type="entry name" value="yjeF_cterm"/>
    <property type="match status" value="1"/>
</dbReference>
<dbReference type="NCBIfam" id="TIGR00197">
    <property type="entry name" value="yjeF_nterm"/>
    <property type="match status" value="1"/>
</dbReference>
<dbReference type="PANTHER" id="PTHR12592:SF0">
    <property type="entry name" value="ATP-DEPENDENT (S)-NAD(P)H-HYDRATE DEHYDRATASE"/>
    <property type="match status" value="1"/>
</dbReference>
<dbReference type="PANTHER" id="PTHR12592">
    <property type="entry name" value="ATP-DEPENDENT (S)-NAD(P)H-HYDRATE DEHYDRATASE FAMILY MEMBER"/>
    <property type="match status" value="1"/>
</dbReference>
<dbReference type="Pfam" id="PF01256">
    <property type="entry name" value="Carb_kinase"/>
    <property type="match status" value="1"/>
</dbReference>
<dbReference type="Pfam" id="PF03853">
    <property type="entry name" value="YjeF_N"/>
    <property type="match status" value="1"/>
</dbReference>
<dbReference type="PIRSF" id="PIRSF017184">
    <property type="entry name" value="Nnr"/>
    <property type="match status" value="1"/>
</dbReference>
<dbReference type="SUPFAM" id="SSF53613">
    <property type="entry name" value="Ribokinase-like"/>
    <property type="match status" value="1"/>
</dbReference>
<dbReference type="SUPFAM" id="SSF64153">
    <property type="entry name" value="YjeF N-terminal domain-like"/>
    <property type="match status" value="1"/>
</dbReference>
<dbReference type="PROSITE" id="PS51383">
    <property type="entry name" value="YJEF_C_3"/>
    <property type="match status" value="1"/>
</dbReference>
<dbReference type="PROSITE" id="PS51385">
    <property type="entry name" value="YJEF_N"/>
    <property type="match status" value="1"/>
</dbReference>